<accession>Q8FYL8</accession>
<accession>G0K7R5</accession>
<evidence type="ECO:0000255" key="1">
    <source>
        <dbReference type="HAMAP-Rule" id="MF_00539"/>
    </source>
</evidence>
<evidence type="ECO:0000256" key="2">
    <source>
        <dbReference type="SAM" id="MobiDB-lite"/>
    </source>
</evidence>
<evidence type="ECO:0000305" key="3"/>
<sequence length="89" mass="9377">MAHKKAGGSSRNGRDSESKRLGVKKFGGEAVLAGNIIVRQRGTKWHPGANVGLGKDHTIFATVNGSVSFRTKANGRTYVSVNPIAEAAE</sequence>
<proteinExistence type="inferred from homology"/>
<keyword id="KW-0687">Ribonucleoprotein</keyword>
<keyword id="KW-0689">Ribosomal protein</keyword>
<name>RL27_BRUSU</name>
<dbReference type="EMBL" id="AE014291">
    <property type="protein sequence ID" value="AAN30744.1"/>
    <property type="molecule type" value="Genomic_DNA"/>
</dbReference>
<dbReference type="EMBL" id="CP002997">
    <property type="protein sequence ID" value="AEM19161.1"/>
    <property type="molecule type" value="Genomic_DNA"/>
</dbReference>
<dbReference type="RefSeq" id="WP_002964927.1">
    <property type="nucleotide sequence ID" value="NZ_KN046804.1"/>
</dbReference>
<dbReference type="SMR" id="Q8FYL8"/>
<dbReference type="GeneID" id="93017814"/>
<dbReference type="KEGG" id="bms:BR1849"/>
<dbReference type="KEGG" id="bsi:BS1330_I1843"/>
<dbReference type="PATRIC" id="fig|204722.21.peg.3447"/>
<dbReference type="HOGENOM" id="CLU_095424_4_1_5"/>
<dbReference type="Proteomes" id="UP000007104">
    <property type="component" value="Chromosome I"/>
</dbReference>
<dbReference type="GO" id="GO:0022625">
    <property type="term" value="C:cytosolic large ribosomal subunit"/>
    <property type="evidence" value="ECO:0007669"/>
    <property type="project" value="TreeGrafter"/>
</dbReference>
<dbReference type="GO" id="GO:0003735">
    <property type="term" value="F:structural constituent of ribosome"/>
    <property type="evidence" value="ECO:0007669"/>
    <property type="project" value="InterPro"/>
</dbReference>
<dbReference type="GO" id="GO:0006412">
    <property type="term" value="P:translation"/>
    <property type="evidence" value="ECO:0007669"/>
    <property type="project" value="UniProtKB-UniRule"/>
</dbReference>
<dbReference type="FunFam" id="2.40.50.100:FF:000020">
    <property type="entry name" value="50S ribosomal protein L27"/>
    <property type="match status" value="1"/>
</dbReference>
<dbReference type="Gene3D" id="2.40.50.100">
    <property type="match status" value="1"/>
</dbReference>
<dbReference type="HAMAP" id="MF_00539">
    <property type="entry name" value="Ribosomal_bL27"/>
    <property type="match status" value="1"/>
</dbReference>
<dbReference type="InterPro" id="IPR001684">
    <property type="entry name" value="Ribosomal_bL27"/>
</dbReference>
<dbReference type="InterPro" id="IPR018261">
    <property type="entry name" value="Ribosomal_bL27_CS"/>
</dbReference>
<dbReference type="NCBIfam" id="TIGR00062">
    <property type="entry name" value="L27"/>
    <property type="match status" value="1"/>
</dbReference>
<dbReference type="PANTHER" id="PTHR15893:SF0">
    <property type="entry name" value="LARGE RIBOSOMAL SUBUNIT PROTEIN BL27M"/>
    <property type="match status" value="1"/>
</dbReference>
<dbReference type="PANTHER" id="PTHR15893">
    <property type="entry name" value="RIBOSOMAL PROTEIN L27"/>
    <property type="match status" value="1"/>
</dbReference>
<dbReference type="Pfam" id="PF01016">
    <property type="entry name" value="Ribosomal_L27"/>
    <property type="match status" value="1"/>
</dbReference>
<dbReference type="PRINTS" id="PR00063">
    <property type="entry name" value="RIBOSOMALL27"/>
</dbReference>
<dbReference type="SUPFAM" id="SSF110324">
    <property type="entry name" value="Ribosomal L27 protein-like"/>
    <property type="match status" value="1"/>
</dbReference>
<dbReference type="PROSITE" id="PS00831">
    <property type="entry name" value="RIBOSOMAL_L27"/>
    <property type="match status" value="1"/>
</dbReference>
<feature type="chain" id="PRO_0000181058" description="Large ribosomal subunit protein bL27">
    <location>
        <begin position="1"/>
        <end position="89"/>
    </location>
</feature>
<feature type="region of interest" description="Disordered" evidence="2">
    <location>
        <begin position="1"/>
        <end position="22"/>
    </location>
</feature>
<gene>
    <name evidence="1" type="primary">rpmA</name>
    <name type="ordered locus">BR1849</name>
    <name type="ordered locus">BS1330_I1843</name>
</gene>
<comment type="similarity">
    <text evidence="1">Belongs to the bacterial ribosomal protein bL27 family.</text>
</comment>
<organism>
    <name type="scientific">Brucella suis biovar 1 (strain 1330)</name>
    <dbReference type="NCBI Taxonomy" id="204722"/>
    <lineage>
        <taxon>Bacteria</taxon>
        <taxon>Pseudomonadati</taxon>
        <taxon>Pseudomonadota</taxon>
        <taxon>Alphaproteobacteria</taxon>
        <taxon>Hyphomicrobiales</taxon>
        <taxon>Brucellaceae</taxon>
        <taxon>Brucella/Ochrobactrum group</taxon>
        <taxon>Brucella</taxon>
    </lineage>
</organism>
<reference key="1">
    <citation type="journal article" date="2002" name="Proc. Natl. Acad. Sci. U.S.A.">
        <title>The Brucella suis genome reveals fundamental similarities between animal and plant pathogens and symbionts.</title>
        <authorList>
            <person name="Paulsen I.T."/>
            <person name="Seshadri R."/>
            <person name="Nelson K.E."/>
            <person name="Eisen J.A."/>
            <person name="Heidelberg J.F."/>
            <person name="Read T.D."/>
            <person name="Dodson R.J."/>
            <person name="Umayam L.A."/>
            <person name="Brinkac L.M."/>
            <person name="Beanan M.J."/>
            <person name="Daugherty S.C."/>
            <person name="DeBoy R.T."/>
            <person name="Durkin A.S."/>
            <person name="Kolonay J.F."/>
            <person name="Madupu R."/>
            <person name="Nelson W.C."/>
            <person name="Ayodeji B."/>
            <person name="Kraul M."/>
            <person name="Shetty J."/>
            <person name="Malek J.A."/>
            <person name="Van Aken S.E."/>
            <person name="Riedmuller S."/>
            <person name="Tettelin H."/>
            <person name="Gill S.R."/>
            <person name="White O."/>
            <person name="Salzberg S.L."/>
            <person name="Hoover D.L."/>
            <person name="Lindler L.E."/>
            <person name="Halling S.M."/>
            <person name="Boyle S.M."/>
            <person name="Fraser C.M."/>
        </authorList>
    </citation>
    <scope>NUCLEOTIDE SEQUENCE [LARGE SCALE GENOMIC DNA]</scope>
    <source>
        <strain>1330</strain>
    </source>
</reference>
<reference key="2">
    <citation type="journal article" date="2011" name="J. Bacteriol.">
        <title>Revised genome sequence of Brucella suis 1330.</title>
        <authorList>
            <person name="Tae H."/>
            <person name="Shallom S."/>
            <person name="Settlage R."/>
            <person name="Preston D."/>
            <person name="Adams L.G."/>
            <person name="Garner H.R."/>
        </authorList>
    </citation>
    <scope>NUCLEOTIDE SEQUENCE [LARGE SCALE GENOMIC DNA]</scope>
    <source>
        <strain>1330</strain>
    </source>
</reference>
<protein>
    <recommendedName>
        <fullName evidence="1">Large ribosomal subunit protein bL27</fullName>
    </recommendedName>
    <alternativeName>
        <fullName evidence="3">50S ribosomal protein L27</fullName>
    </alternativeName>
</protein>